<feature type="chain" id="PRO_1000140024" description="Multifunctional CCA protein">
    <location>
        <begin position="1"/>
        <end position="413"/>
    </location>
</feature>
<feature type="domain" description="HD" evidence="1">
    <location>
        <begin position="232"/>
        <end position="333"/>
    </location>
</feature>
<feature type="binding site" evidence="1">
    <location>
        <position position="8"/>
    </location>
    <ligand>
        <name>ATP</name>
        <dbReference type="ChEBI" id="CHEBI:30616"/>
    </ligand>
</feature>
<feature type="binding site" evidence="1">
    <location>
        <position position="8"/>
    </location>
    <ligand>
        <name>CTP</name>
        <dbReference type="ChEBI" id="CHEBI:37563"/>
    </ligand>
</feature>
<feature type="binding site" evidence="1">
    <location>
        <position position="11"/>
    </location>
    <ligand>
        <name>ATP</name>
        <dbReference type="ChEBI" id="CHEBI:30616"/>
    </ligand>
</feature>
<feature type="binding site" evidence="1">
    <location>
        <position position="11"/>
    </location>
    <ligand>
        <name>CTP</name>
        <dbReference type="ChEBI" id="CHEBI:37563"/>
    </ligand>
</feature>
<feature type="binding site" evidence="1">
    <location>
        <position position="21"/>
    </location>
    <ligand>
        <name>Mg(2+)</name>
        <dbReference type="ChEBI" id="CHEBI:18420"/>
    </ligand>
</feature>
<feature type="binding site" evidence="1">
    <location>
        <position position="23"/>
    </location>
    <ligand>
        <name>Mg(2+)</name>
        <dbReference type="ChEBI" id="CHEBI:18420"/>
    </ligand>
</feature>
<feature type="binding site" evidence="1">
    <location>
        <position position="91"/>
    </location>
    <ligand>
        <name>ATP</name>
        <dbReference type="ChEBI" id="CHEBI:30616"/>
    </ligand>
</feature>
<feature type="binding site" evidence="1">
    <location>
        <position position="91"/>
    </location>
    <ligand>
        <name>CTP</name>
        <dbReference type="ChEBI" id="CHEBI:37563"/>
    </ligand>
</feature>
<feature type="binding site" evidence="1">
    <location>
        <position position="143"/>
    </location>
    <ligand>
        <name>ATP</name>
        <dbReference type="ChEBI" id="CHEBI:30616"/>
    </ligand>
</feature>
<feature type="binding site" evidence="1">
    <location>
        <position position="143"/>
    </location>
    <ligand>
        <name>CTP</name>
        <dbReference type="ChEBI" id="CHEBI:37563"/>
    </ligand>
</feature>
<feature type="binding site" evidence="1">
    <location>
        <position position="146"/>
    </location>
    <ligand>
        <name>ATP</name>
        <dbReference type="ChEBI" id="CHEBI:30616"/>
    </ligand>
</feature>
<feature type="binding site" evidence="1">
    <location>
        <position position="146"/>
    </location>
    <ligand>
        <name>CTP</name>
        <dbReference type="ChEBI" id="CHEBI:37563"/>
    </ligand>
</feature>
<protein>
    <recommendedName>
        <fullName evidence="1">Multifunctional CCA protein</fullName>
    </recommendedName>
    <domain>
        <recommendedName>
            <fullName evidence="1">CCA-adding enzyme</fullName>
            <ecNumber evidence="1">2.7.7.72</ecNumber>
        </recommendedName>
        <alternativeName>
            <fullName evidence="1">CCA tRNA nucleotidyltransferase</fullName>
        </alternativeName>
        <alternativeName>
            <fullName evidence="1">tRNA CCA-pyrophosphorylase</fullName>
        </alternativeName>
        <alternativeName>
            <fullName evidence="1">tRNA adenylyl-/cytidylyl-transferase</fullName>
        </alternativeName>
        <alternativeName>
            <fullName evidence="1">tRNA nucleotidyltransferase</fullName>
        </alternativeName>
        <alternativeName>
            <fullName evidence="1">tRNA-NT</fullName>
        </alternativeName>
    </domain>
    <domain>
        <recommendedName>
            <fullName evidence="1">2'-nucleotidase</fullName>
            <ecNumber evidence="1">3.1.3.-</ecNumber>
        </recommendedName>
    </domain>
    <domain>
        <recommendedName>
            <fullName evidence="1">2',3'-cyclic phosphodiesterase</fullName>
            <ecNumber evidence="1">3.1.4.-</ecNumber>
        </recommendedName>
    </domain>
    <domain>
        <recommendedName>
            <fullName evidence="1">Phosphatase</fullName>
            <ecNumber evidence="1">3.1.3.-</ecNumber>
        </recommendedName>
    </domain>
</protein>
<sequence length="413" mass="45485">MNIYAVGGAIRDELLGVPVQDRDYVVVGATPEQMTAQGFRPVGKDFPVFLHPQTQEEYALARTERKTAAGYHGFQFHYAPDVTLDEDLARRDLTINAMAREVSPEGALVGPVIDPFDGQADLRARVFRHVSDAFVEDPVRILRIARFAARFADFTVADETLALMRRMVDAGEIDALVPERVWQEIARGLMEAKPSRMFAVLRDCGALARIVPEVDALWGVPQRADYHPEVDTGVHVMMVVDYAAKQGYSLAVRFAALTHDLGKGTTPADVLPRHVGHESRSVELLKPLCERLRVPNESRDLALVVAREHGNLHRVMEMGAAALVRLFERSDALRKPARFAELLQACESDARGRLGLDAQPYPQAERLRVALAAARSVDAGAIARGIGNDTEKIKEAVHRARVQAVAQALAIGE</sequence>
<dbReference type="EC" id="2.7.7.72" evidence="1"/>
<dbReference type="EC" id="3.1.3.-" evidence="1"/>
<dbReference type="EC" id="3.1.4.-" evidence="1"/>
<dbReference type="EMBL" id="CP000958">
    <property type="protein sequence ID" value="ACA92208.1"/>
    <property type="molecule type" value="Genomic_DNA"/>
</dbReference>
<dbReference type="RefSeq" id="WP_012329392.1">
    <property type="nucleotide sequence ID" value="NC_010508.1"/>
</dbReference>
<dbReference type="SMR" id="B1JZZ7"/>
<dbReference type="GeneID" id="83049830"/>
<dbReference type="KEGG" id="bcm:Bcenmc03_3050"/>
<dbReference type="HOGENOM" id="CLU_015961_1_1_4"/>
<dbReference type="Proteomes" id="UP000002169">
    <property type="component" value="Chromosome 1"/>
</dbReference>
<dbReference type="GO" id="GO:0005524">
    <property type="term" value="F:ATP binding"/>
    <property type="evidence" value="ECO:0007669"/>
    <property type="project" value="UniProtKB-UniRule"/>
</dbReference>
<dbReference type="GO" id="GO:0004810">
    <property type="term" value="F:CCA tRNA nucleotidyltransferase activity"/>
    <property type="evidence" value="ECO:0007669"/>
    <property type="project" value="UniProtKB-UniRule"/>
</dbReference>
<dbReference type="GO" id="GO:0004112">
    <property type="term" value="F:cyclic-nucleotide phosphodiesterase activity"/>
    <property type="evidence" value="ECO:0007669"/>
    <property type="project" value="UniProtKB-UniRule"/>
</dbReference>
<dbReference type="GO" id="GO:0000287">
    <property type="term" value="F:magnesium ion binding"/>
    <property type="evidence" value="ECO:0007669"/>
    <property type="project" value="UniProtKB-UniRule"/>
</dbReference>
<dbReference type="GO" id="GO:0016791">
    <property type="term" value="F:phosphatase activity"/>
    <property type="evidence" value="ECO:0007669"/>
    <property type="project" value="UniProtKB-UniRule"/>
</dbReference>
<dbReference type="GO" id="GO:0000049">
    <property type="term" value="F:tRNA binding"/>
    <property type="evidence" value="ECO:0007669"/>
    <property type="project" value="UniProtKB-UniRule"/>
</dbReference>
<dbReference type="GO" id="GO:0042245">
    <property type="term" value="P:RNA repair"/>
    <property type="evidence" value="ECO:0007669"/>
    <property type="project" value="UniProtKB-KW"/>
</dbReference>
<dbReference type="GO" id="GO:0001680">
    <property type="term" value="P:tRNA 3'-terminal CCA addition"/>
    <property type="evidence" value="ECO:0007669"/>
    <property type="project" value="UniProtKB-UniRule"/>
</dbReference>
<dbReference type="CDD" id="cd00077">
    <property type="entry name" value="HDc"/>
    <property type="match status" value="1"/>
</dbReference>
<dbReference type="CDD" id="cd05398">
    <property type="entry name" value="NT_ClassII-CCAase"/>
    <property type="match status" value="1"/>
</dbReference>
<dbReference type="Gene3D" id="3.30.460.10">
    <property type="entry name" value="Beta Polymerase, domain 2"/>
    <property type="match status" value="1"/>
</dbReference>
<dbReference type="Gene3D" id="1.10.3090.10">
    <property type="entry name" value="cca-adding enzyme, domain 2"/>
    <property type="match status" value="1"/>
</dbReference>
<dbReference type="HAMAP" id="MF_01261">
    <property type="entry name" value="CCA_bact_type1"/>
    <property type="match status" value="1"/>
</dbReference>
<dbReference type="HAMAP" id="MF_01262">
    <property type="entry name" value="CCA_bact_type2"/>
    <property type="match status" value="1"/>
</dbReference>
<dbReference type="InterPro" id="IPR012006">
    <property type="entry name" value="CCA_bact"/>
</dbReference>
<dbReference type="InterPro" id="IPR003607">
    <property type="entry name" value="HD/PDEase_dom"/>
</dbReference>
<dbReference type="InterPro" id="IPR006674">
    <property type="entry name" value="HD_domain"/>
</dbReference>
<dbReference type="InterPro" id="IPR043519">
    <property type="entry name" value="NT_sf"/>
</dbReference>
<dbReference type="InterPro" id="IPR002646">
    <property type="entry name" value="PolA_pol_head_dom"/>
</dbReference>
<dbReference type="InterPro" id="IPR032828">
    <property type="entry name" value="PolyA_RNA-bd"/>
</dbReference>
<dbReference type="InterPro" id="IPR050124">
    <property type="entry name" value="tRNA_CCA-adding_enzyme"/>
</dbReference>
<dbReference type="NCBIfam" id="NF008137">
    <property type="entry name" value="PRK10885.1"/>
    <property type="match status" value="1"/>
</dbReference>
<dbReference type="PANTHER" id="PTHR47545">
    <property type="entry name" value="MULTIFUNCTIONAL CCA PROTEIN"/>
    <property type="match status" value="1"/>
</dbReference>
<dbReference type="PANTHER" id="PTHR47545:SF1">
    <property type="entry name" value="MULTIFUNCTIONAL CCA PROTEIN"/>
    <property type="match status" value="1"/>
</dbReference>
<dbReference type="Pfam" id="PF01966">
    <property type="entry name" value="HD"/>
    <property type="match status" value="1"/>
</dbReference>
<dbReference type="Pfam" id="PF01743">
    <property type="entry name" value="PolyA_pol"/>
    <property type="match status" value="1"/>
</dbReference>
<dbReference type="Pfam" id="PF12627">
    <property type="entry name" value="PolyA_pol_RNAbd"/>
    <property type="match status" value="1"/>
</dbReference>
<dbReference type="PIRSF" id="PIRSF000813">
    <property type="entry name" value="CCA_bact"/>
    <property type="match status" value="1"/>
</dbReference>
<dbReference type="SUPFAM" id="SSF81301">
    <property type="entry name" value="Nucleotidyltransferase"/>
    <property type="match status" value="1"/>
</dbReference>
<dbReference type="SUPFAM" id="SSF81891">
    <property type="entry name" value="Poly A polymerase C-terminal region-like"/>
    <property type="match status" value="1"/>
</dbReference>
<dbReference type="PROSITE" id="PS51831">
    <property type="entry name" value="HD"/>
    <property type="match status" value="1"/>
</dbReference>
<organism>
    <name type="scientific">Burkholderia orbicola (strain MC0-3)</name>
    <dbReference type="NCBI Taxonomy" id="406425"/>
    <lineage>
        <taxon>Bacteria</taxon>
        <taxon>Pseudomonadati</taxon>
        <taxon>Pseudomonadota</taxon>
        <taxon>Betaproteobacteria</taxon>
        <taxon>Burkholderiales</taxon>
        <taxon>Burkholderiaceae</taxon>
        <taxon>Burkholderia</taxon>
        <taxon>Burkholderia cepacia complex</taxon>
        <taxon>Burkholderia orbicola</taxon>
    </lineage>
</organism>
<gene>
    <name evidence="1" type="primary">cca</name>
    <name type="ordered locus">Bcenmc03_3050</name>
</gene>
<reference key="1">
    <citation type="submission" date="2008-02" db="EMBL/GenBank/DDBJ databases">
        <title>Complete sequence of chromosome 1 of Burkholderia cenocepacia MC0-3.</title>
        <authorList>
            <person name="Copeland A."/>
            <person name="Lucas S."/>
            <person name="Lapidus A."/>
            <person name="Barry K."/>
            <person name="Bruce D."/>
            <person name="Goodwin L."/>
            <person name="Glavina del Rio T."/>
            <person name="Dalin E."/>
            <person name="Tice H."/>
            <person name="Pitluck S."/>
            <person name="Chain P."/>
            <person name="Malfatti S."/>
            <person name="Shin M."/>
            <person name="Vergez L."/>
            <person name="Schmutz J."/>
            <person name="Larimer F."/>
            <person name="Land M."/>
            <person name="Hauser L."/>
            <person name="Kyrpides N."/>
            <person name="Mikhailova N."/>
            <person name="Tiedje J."/>
            <person name="Richardson P."/>
        </authorList>
    </citation>
    <scope>NUCLEOTIDE SEQUENCE [LARGE SCALE GENOMIC DNA]</scope>
    <source>
        <strain>MC0-3</strain>
    </source>
</reference>
<accession>B1JZZ7</accession>
<keyword id="KW-0067">ATP-binding</keyword>
<keyword id="KW-0378">Hydrolase</keyword>
<keyword id="KW-0460">Magnesium</keyword>
<keyword id="KW-0479">Metal-binding</keyword>
<keyword id="KW-0511">Multifunctional enzyme</keyword>
<keyword id="KW-0533">Nickel</keyword>
<keyword id="KW-0547">Nucleotide-binding</keyword>
<keyword id="KW-0548">Nucleotidyltransferase</keyword>
<keyword id="KW-0692">RNA repair</keyword>
<keyword id="KW-0694">RNA-binding</keyword>
<keyword id="KW-0808">Transferase</keyword>
<keyword id="KW-0819">tRNA processing</keyword>
<proteinExistence type="inferred from homology"/>
<comment type="function">
    <text evidence="1">Catalyzes the addition and repair of the essential 3'-terminal CCA sequence in tRNAs without using a nucleic acid template. Adds these three nucleotides in the order of C, C, and A to the tRNA nucleotide-73, using CTP and ATP as substrates and producing inorganic pyrophosphate. tRNA 3'-terminal CCA addition is required both for tRNA processing and repair. Also involved in tRNA surveillance by mediating tandem CCA addition to generate a CCACCA at the 3' terminus of unstable tRNAs. While stable tRNAs receive only 3'-terminal CCA, unstable tRNAs are marked with CCACCA and rapidly degraded.</text>
</comment>
<comment type="catalytic activity">
    <reaction evidence="1">
        <text>a tRNA precursor + 2 CTP + ATP = a tRNA with a 3' CCA end + 3 diphosphate</text>
        <dbReference type="Rhea" id="RHEA:14433"/>
        <dbReference type="Rhea" id="RHEA-COMP:10465"/>
        <dbReference type="Rhea" id="RHEA-COMP:10468"/>
        <dbReference type="ChEBI" id="CHEBI:30616"/>
        <dbReference type="ChEBI" id="CHEBI:33019"/>
        <dbReference type="ChEBI" id="CHEBI:37563"/>
        <dbReference type="ChEBI" id="CHEBI:74896"/>
        <dbReference type="ChEBI" id="CHEBI:83071"/>
        <dbReference type="EC" id="2.7.7.72"/>
    </reaction>
</comment>
<comment type="catalytic activity">
    <reaction evidence="1">
        <text>a tRNA with a 3' CCA end + 2 CTP + ATP = a tRNA with a 3' CCACCA end + 3 diphosphate</text>
        <dbReference type="Rhea" id="RHEA:76235"/>
        <dbReference type="Rhea" id="RHEA-COMP:10468"/>
        <dbReference type="Rhea" id="RHEA-COMP:18655"/>
        <dbReference type="ChEBI" id="CHEBI:30616"/>
        <dbReference type="ChEBI" id="CHEBI:33019"/>
        <dbReference type="ChEBI" id="CHEBI:37563"/>
        <dbReference type="ChEBI" id="CHEBI:83071"/>
        <dbReference type="ChEBI" id="CHEBI:195187"/>
    </reaction>
    <physiologicalReaction direction="left-to-right" evidence="1">
        <dbReference type="Rhea" id="RHEA:76236"/>
    </physiologicalReaction>
</comment>
<comment type="cofactor">
    <cofactor evidence="1">
        <name>Mg(2+)</name>
        <dbReference type="ChEBI" id="CHEBI:18420"/>
    </cofactor>
    <text evidence="1">Magnesium is required for nucleotidyltransferase activity.</text>
</comment>
<comment type="cofactor">
    <cofactor evidence="1">
        <name>Ni(2+)</name>
        <dbReference type="ChEBI" id="CHEBI:49786"/>
    </cofactor>
    <text evidence="1">Nickel for phosphatase activity.</text>
</comment>
<comment type="subunit">
    <text evidence="1">Monomer. Can also form homodimers and oligomers.</text>
</comment>
<comment type="domain">
    <text evidence="1">Comprises two domains: an N-terminal domain containing the nucleotidyltransferase activity and a C-terminal HD domain associated with both phosphodiesterase and phosphatase activities.</text>
</comment>
<comment type="miscellaneous">
    <text evidence="1">A single active site specifically recognizes both ATP and CTP and is responsible for their addition.</text>
</comment>
<comment type="similarity">
    <text evidence="1">Belongs to the tRNA nucleotidyltransferase/poly(A) polymerase family. Bacterial CCA-adding enzyme type 1 subfamily.</text>
</comment>
<name>CCA_BURO0</name>
<evidence type="ECO:0000255" key="1">
    <source>
        <dbReference type="HAMAP-Rule" id="MF_01261"/>
    </source>
</evidence>